<name>KDSA_VIBPA</name>
<organism>
    <name type="scientific">Vibrio parahaemolyticus serotype O3:K6 (strain RIMD 2210633)</name>
    <dbReference type="NCBI Taxonomy" id="223926"/>
    <lineage>
        <taxon>Bacteria</taxon>
        <taxon>Pseudomonadati</taxon>
        <taxon>Pseudomonadota</taxon>
        <taxon>Gammaproteobacteria</taxon>
        <taxon>Vibrionales</taxon>
        <taxon>Vibrionaceae</taxon>
        <taxon>Vibrio</taxon>
    </lineage>
</organism>
<dbReference type="EC" id="2.5.1.55" evidence="1"/>
<dbReference type="EMBL" id="BA000031">
    <property type="protein sequence ID" value="BAC59010.1"/>
    <property type="molecule type" value="Genomic_DNA"/>
</dbReference>
<dbReference type="RefSeq" id="NP_797126.1">
    <property type="nucleotide sequence ID" value="NC_004603.1"/>
</dbReference>
<dbReference type="RefSeq" id="WP_005457350.1">
    <property type="nucleotide sequence ID" value="NC_004603.1"/>
</dbReference>
<dbReference type="SMR" id="Q87RN0"/>
<dbReference type="GeneID" id="1188242"/>
<dbReference type="KEGG" id="vpa:VP0747"/>
<dbReference type="PATRIC" id="fig|223926.6.peg.714"/>
<dbReference type="eggNOG" id="COG2877">
    <property type="taxonomic scope" value="Bacteria"/>
</dbReference>
<dbReference type="HOGENOM" id="CLU_036666_0_0_6"/>
<dbReference type="UniPathway" id="UPA00030"/>
<dbReference type="UniPathway" id="UPA00357">
    <property type="reaction ID" value="UER00474"/>
</dbReference>
<dbReference type="Proteomes" id="UP000002493">
    <property type="component" value="Chromosome 1"/>
</dbReference>
<dbReference type="GO" id="GO:0005737">
    <property type="term" value="C:cytoplasm"/>
    <property type="evidence" value="ECO:0007669"/>
    <property type="project" value="UniProtKB-SubCell"/>
</dbReference>
<dbReference type="GO" id="GO:0008676">
    <property type="term" value="F:3-deoxy-8-phosphooctulonate synthase activity"/>
    <property type="evidence" value="ECO:0007669"/>
    <property type="project" value="UniProtKB-UniRule"/>
</dbReference>
<dbReference type="GO" id="GO:0019294">
    <property type="term" value="P:keto-3-deoxy-D-manno-octulosonic acid biosynthetic process"/>
    <property type="evidence" value="ECO:0007669"/>
    <property type="project" value="UniProtKB-UniRule"/>
</dbReference>
<dbReference type="FunFam" id="3.20.20.70:FF:000058">
    <property type="entry name" value="2-dehydro-3-deoxyphosphooctonate aldolase"/>
    <property type="match status" value="1"/>
</dbReference>
<dbReference type="Gene3D" id="3.20.20.70">
    <property type="entry name" value="Aldolase class I"/>
    <property type="match status" value="1"/>
</dbReference>
<dbReference type="HAMAP" id="MF_00056">
    <property type="entry name" value="KDO8P_synth"/>
    <property type="match status" value="1"/>
</dbReference>
<dbReference type="InterPro" id="IPR013785">
    <property type="entry name" value="Aldolase_TIM"/>
</dbReference>
<dbReference type="InterPro" id="IPR006218">
    <property type="entry name" value="DAHP1/KDSA"/>
</dbReference>
<dbReference type="InterPro" id="IPR006269">
    <property type="entry name" value="KDO8P_synthase"/>
</dbReference>
<dbReference type="NCBIfam" id="TIGR01362">
    <property type="entry name" value="KDO8P_synth"/>
    <property type="match status" value="1"/>
</dbReference>
<dbReference type="NCBIfam" id="NF003543">
    <property type="entry name" value="PRK05198.1"/>
    <property type="match status" value="1"/>
</dbReference>
<dbReference type="NCBIfam" id="NF009109">
    <property type="entry name" value="PRK12457.1"/>
    <property type="match status" value="1"/>
</dbReference>
<dbReference type="PANTHER" id="PTHR21057">
    <property type="entry name" value="PHOSPHO-2-DEHYDRO-3-DEOXYHEPTONATE ALDOLASE"/>
    <property type="match status" value="1"/>
</dbReference>
<dbReference type="Pfam" id="PF00793">
    <property type="entry name" value="DAHP_synth_1"/>
    <property type="match status" value="1"/>
</dbReference>
<dbReference type="SUPFAM" id="SSF51569">
    <property type="entry name" value="Aldolase"/>
    <property type="match status" value="1"/>
</dbReference>
<proteinExistence type="inferred from homology"/>
<gene>
    <name evidence="1" type="primary">kdsA</name>
    <name type="ordered locus">VP0747</name>
</gene>
<accession>Q87RN0</accession>
<comment type="catalytic activity">
    <reaction evidence="1">
        <text>D-arabinose 5-phosphate + phosphoenolpyruvate + H2O = 3-deoxy-alpha-D-manno-2-octulosonate-8-phosphate + phosphate</text>
        <dbReference type="Rhea" id="RHEA:14053"/>
        <dbReference type="ChEBI" id="CHEBI:15377"/>
        <dbReference type="ChEBI" id="CHEBI:43474"/>
        <dbReference type="ChEBI" id="CHEBI:57693"/>
        <dbReference type="ChEBI" id="CHEBI:58702"/>
        <dbReference type="ChEBI" id="CHEBI:85985"/>
        <dbReference type="EC" id="2.5.1.55"/>
    </reaction>
</comment>
<comment type="pathway">
    <text evidence="1">Carbohydrate biosynthesis; 3-deoxy-D-manno-octulosonate biosynthesis; 3-deoxy-D-manno-octulosonate from D-ribulose 5-phosphate: step 2/3.</text>
</comment>
<comment type="pathway">
    <text evidence="1">Bacterial outer membrane biogenesis; lipopolysaccharide biosynthesis.</text>
</comment>
<comment type="subcellular location">
    <subcellularLocation>
        <location evidence="1">Cytoplasm</location>
    </subcellularLocation>
</comment>
<comment type="similarity">
    <text evidence="1">Belongs to the KdsA family.</text>
</comment>
<keyword id="KW-0963">Cytoplasm</keyword>
<keyword id="KW-0448">Lipopolysaccharide biosynthesis</keyword>
<keyword id="KW-0808">Transferase</keyword>
<feature type="chain" id="PRO_0000187169" description="2-dehydro-3-deoxyphosphooctonate aldolase">
    <location>
        <begin position="1"/>
        <end position="283"/>
    </location>
</feature>
<reference key="1">
    <citation type="journal article" date="2003" name="Lancet">
        <title>Genome sequence of Vibrio parahaemolyticus: a pathogenic mechanism distinct from that of V. cholerae.</title>
        <authorList>
            <person name="Makino K."/>
            <person name="Oshima K."/>
            <person name="Kurokawa K."/>
            <person name="Yokoyama K."/>
            <person name="Uda T."/>
            <person name="Tagomori K."/>
            <person name="Iijima Y."/>
            <person name="Najima M."/>
            <person name="Nakano M."/>
            <person name="Yamashita A."/>
            <person name="Kubota Y."/>
            <person name="Kimura S."/>
            <person name="Yasunaga T."/>
            <person name="Honda T."/>
            <person name="Shinagawa H."/>
            <person name="Hattori M."/>
            <person name="Iida T."/>
        </authorList>
    </citation>
    <scope>NUCLEOTIDE SEQUENCE [LARGE SCALE GENOMIC DNA]</scope>
    <source>
        <strain>RIMD 2210633</strain>
    </source>
</reference>
<protein>
    <recommendedName>
        <fullName evidence="1">2-dehydro-3-deoxyphosphooctonate aldolase</fullName>
        <ecNumber evidence="1">2.5.1.55</ecNumber>
    </recommendedName>
    <alternativeName>
        <fullName evidence="1">3-deoxy-D-manno-octulosonic acid 8-phosphate synthase</fullName>
    </alternativeName>
    <alternativeName>
        <fullName evidence="1">KDO-8-phosphate synthase</fullName>
        <shortName evidence="1">KDO 8-P synthase</shortName>
        <shortName evidence="1">KDOPS</shortName>
    </alternativeName>
    <alternativeName>
        <fullName evidence="1">Phospho-2-dehydro-3-deoxyoctonate aldolase</fullName>
    </alternativeName>
</protein>
<evidence type="ECO:0000255" key="1">
    <source>
        <dbReference type="HAMAP-Rule" id="MF_00056"/>
    </source>
</evidence>
<sequence length="283" mass="30809">MEQKIVNIGDIQVANDKPFTLFAGMNVLESRDLAMQICEHYVKVTDKLGIPYVFKASFDKANRSSVHSYRGPGLEEGMKIFQELKDTFGVKIITDVHTEAQAQPVADVVDVIQLPAFLARQTDLVEAMAKTGAVINVKKPQFMSPGQVGNIVEKFAECGNDKIILCERGSCHGYDNLVVDMLGFGVMKNASKGSPIIFDVTHSLQMRDPSGAASGGRREQTVELAKAGLATGIAGLFIEAHPNPDQARCDGPSALPLDKLEPFLAQMKSLDDLIKSFENIDIK</sequence>